<dbReference type="EMBL" id="AF027184">
    <property type="protein sequence ID" value="AAB82748.1"/>
    <property type="molecule type" value="Genomic_DNA"/>
</dbReference>
<dbReference type="SMR" id="P56496"/>
<dbReference type="GlyCosmos" id="P56496">
    <property type="glycosylation" value="2 sites, No reported glycans"/>
</dbReference>
<dbReference type="GO" id="GO:0005886">
    <property type="term" value="C:plasma membrane"/>
    <property type="evidence" value="ECO:0000250"/>
    <property type="project" value="UniProtKB"/>
</dbReference>
<dbReference type="GO" id="GO:0045202">
    <property type="term" value="C:synapse"/>
    <property type="evidence" value="ECO:0007669"/>
    <property type="project" value="GOC"/>
</dbReference>
<dbReference type="GO" id="GO:0004993">
    <property type="term" value="F:G protein-coupled serotonin receptor activity"/>
    <property type="evidence" value="ECO:0000250"/>
    <property type="project" value="UniProtKB"/>
</dbReference>
<dbReference type="GO" id="GO:0071880">
    <property type="term" value="P:adenylate cyclase-activating adrenergic receptor signaling pathway"/>
    <property type="evidence" value="ECO:0007669"/>
    <property type="project" value="TreeGrafter"/>
</dbReference>
<dbReference type="GO" id="GO:0007198">
    <property type="term" value="P:adenylate cyclase-inhibiting serotonin receptor signaling pathway"/>
    <property type="evidence" value="ECO:0000250"/>
    <property type="project" value="UniProtKB"/>
</dbReference>
<dbReference type="GO" id="GO:0046849">
    <property type="term" value="P:bone remodeling"/>
    <property type="evidence" value="ECO:0007669"/>
    <property type="project" value="InterPro"/>
</dbReference>
<dbReference type="GO" id="GO:0071312">
    <property type="term" value="P:cellular response to alkaloid"/>
    <property type="evidence" value="ECO:0000250"/>
    <property type="project" value="UniProtKB"/>
</dbReference>
<dbReference type="GO" id="GO:0071466">
    <property type="term" value="P:cellular response to xenobiotic stimulus"/>
    <property type="evidence" value="ECO:0000250"/>
    <property type="project" value="UniProtKB"/>
</dbReference>
<dbReference type="GO" id="GO:0007268">
    <property type="term" value="P:chemical synaptic transmission"/>
    <property type="evidence" value="ECO:0007669"/>
    <property type="project" value="InterPro"/>
</dbReference>
<dbReference type="GO" id="GO:0014063">
    <property type="term" value="P:negative regulation of serotonin secretion"/>
    <property type="evidence" value="ECO:0000250"/>
    <property type="project" value="UniProtKB"/>
</dbReference>
<dbReference type="GO" id="GO:0043410">
    <property type="term" value="P:positive regulation of MAPK cascade"/>
    <property type="evidence" value="ECO:0007669"/>
    <property type="project" value="TreeGrafter"/>
</dbReference>
<dbReference type="GO" id="GO:0050795">
    <property type="term" value="P:regulation of behavior"/>
    <property type="evidence" value="ECO:0007669"/>
    <property type="project" value="InterPro"/>
</dbReference>
<dbReference type="GO" id="GO:0042310">
    <property type="term" value="P:vasoconstriction"/>
    <property type="evidence" value="ECO:0007669"/>
    <property type="project" value="InterPro"/>
</dbReference>
<dbReference type="CDD" id="cd15333">
    <property type="entry name" value="7tmA_5-HT1B_1D"/>
    <property type="match status" value="1"/>
</dbReference>
<dbReference type="Gene3D" id="1.20.1070.10">
    <property type="entry name" value="Rhodopsin 7-helix transmembrane proteins"/>
    <property type="match status" value="1"/>
</dbReference>
<dbReference type="InterPro" id="IPR002147">
    <property type="entry name" value="5HT1B_rcpt"/>
</dbReference>
<dbReference type="InterPro" id="IPR002231">
    <property type="entry name" value="5HT_rcpt"/>
</dbReference>
<dbReference type="InterPro" id="IPR000276">
    <property type="entry name" value="GPCR_Rhodpsn"/>
</dbReference>
<dbReference type="InterPro" id="IPR017452">
    <property type="entry name" value="GPCR_Rhodpsn_7TM"/>
</dbReference>
<dbReference type="PANTHER" id="PTHR24248:SF201">
    <property type="entry name" value="5-HYDROXYTRYPTAMINE RECEPTOR 1B"/>
    <property type="match status" value="1"/>
</dbReference>
<dbReference type="PANTHER" id="PTHR24248">
    <property type="entry name" value="ADRENERGIC RECEPTOR-RELATED G-PROTEIN COUPLED RECEPTOR"/>
    <property type="match status" value="1"/>
</dbReference>
<dbReference type="Pfam" id="PF00001">
    <property type="entry name" value="7tm_1"/>
    <property type="match status" value="1"/>
</dbReference>
<dbReference type="PRINTS" id="PR00513">
    <property type="entry name" value="5HT1BRECEPTR"/>
</dbReference>
<dbReference type="PRINTS" id="PR01101">
    <property type="entry name" value="5HTRECEPTOR"/>
</dbReference>
<dbReference type="PRINTS" id="PR00237">
    <property type="entry name" value="GPCRRHODOPSN"/>
</dbReference>
<dbReference type="SMART" id="SM01381">
    <property type="entry name" value="7TM_GPCR_Srsx"/>
    <property type="match status" value="1"/>
</dbReference>
<dbReference type="SUPFAM" id="SSF81321">
    <property type="entry name" value="Family A G protein-coupled receptor-like"/>
    <property type="match status" value="1"/>
</dbReference>
<dbReference type="PROSITE" id="PS00237">
    <property type="entry name" value="G_PROTEIN_RECEP_F1_1"/>
    <property type="match status" value="1"/>
</dbReference>
<dbReference type="PROSITE" id="PS50262">
    <property type="entry name" value="G_PROTEIN_RECEP_F1_2"/>
    <property type="match status" value="1"/>
</dbReference>
<comment type="function">
    <text evidence="1">G-protein coupled receptor for 5-hydroxytryptamine (serotonin). Also functions as a receptor for ergot alkaloid derivatives, various anxiolytic and antidepressant drugs and other psychoactive substances, such as lysergic acid diethylamide (LSD). Ligand binding causes a conformation change that triggers signaling via guanine nucleotide-binding proteins (G proteins) and modulates the activity of downstream effectors, such as adenylate cyclase. HTR1B is coupled to G(i)/G(o) G alpha proteins and mediates inhibitory neurotransmission by inhibiting adenylate cyclase activity. Arrestin family members inhibit signaling via G proteins and mediate activation of alternative signaling pathways. Regulates the release of 5-hydroxytryptamine, dopamine and acetylcholine in the brain, and thereby affects neural activity, nociceptive processing, pain perception, mood and behavior. Besides, plays a role in vasoconstriction of cerebral arteries.</text>
</comment>
<comment type="subunit">
    <text evidence="1">Homodimer. Heterodimer with HTR1D.</text>
</comment>
<comment type="subcellular location">
    <subcellularLocation>
        <location evidence="1">Cell membrane</location>
        <topology evidence="1">Multi-pass membrane protein</topology>
    </subcellularLocation>
</comment>
<comment type="domain">
    <text evidence="1">Ligands are bound in a hydrophobic pocket formed by the transmembrane helices.</text>
</comment>
<comment type="domain">
    <text evidence="1">A residue in the 7th transmembrane region ('Thr-355' in human, 'Asn-351' in mouse and rat) is important for species-specific sensitivity to various agonists.</text>
</comment>
<comment type="PTM">
    <text evidence="1">Phosphorylated. Desensitization of the receptor may be mediated by its phosphorylation.</text>
</comment>
<comment type="PTM">
    <text evidence="1">Palmitoylated.</text>
</comment>
<comment type="similarity">
    <text evidence="4">Belongs to the G-protein coupled receptor 1 family.</text>
</comment>
<evidence type="ECO:0000250" key="1">
    <source>
        <dbReference type="UniProtKB" id="P28222"/>
    </source>
</evidence>
<evidence type="ECO:0000250" key="2">
    <source>
        <dbReference type="UniProtKB" id="P41595"/>
    </source>
</evidence>
<evidence type="ECO:0000255" key="3"/>
<evidence type="ECO:0000255" key="4">
    <source>
        <dbReference type="PROSITE-ProRule" id="PRU00521"/>
    </source>
</evidence>
<evidence type="ECO:0000256" key="5">
    <source>
        <dbReference type="SAM" id="MobiDB-lite"/>
    </source>
</evidence>
<accession>P56496</accession>
<organism>
    <name type="scientific">Spalax ehrenbergi</name>
    <name type="common">Middle East blind mole rat</name>
    <name type="synonym">Nannospalax ehrenbergi</name>
    <dbReference type="NCBI Taxonomy" id="30637"/>
    <lineage>
        <taxon>Eukaryota</taxon>
        <taxon>Metazoa</taxon>
        <taxon>Chordata</taxon>
        <taxon>Craniata</taxon>
        <taxon>Vertebrata</taxon>
        <taxon>Euteleostomi</taxon>
        <taxon>Mammalia</taxon>
        <taxon>Eutheria</taxon>
        <taxon>Euarchontoglires</taxon>
        <taxon>Glires</taxon>
        <taxon>Rodentia</taxon>
        <taxon>Myomorpha</taxon>
        <taxon>Muroidea</taxon>
        <taxon>Spalacidae</taxon>
        <taxon>Spalacinae</taxon>
        <taxon>Nannospalax</taxon>
    </lineage>
</organism>
<gene>
    <name type="primary">HTR1B</name>
    <name type="synonym">5HT1B</name>
</gene>
<protein>
    <recommendedName>
        <fullName>5-hydroxytryptamine receptor 1B</fullName>
        <shortName>5-HT-1B</shortName>
        <shortName>5-HT1B</shortName>
    </recommendedName>
    <alternativeName>
        <fullName>Serotonin receptor 1B</fullName>
    </alternativeName>
</protein>
<keyword id="KW-0085">Behavior</keyword>
<keyword id="KW-1003">Cell membrane</keyword>
<keyword id="KW-1015">Disulfide bond</keyword>
<keyword id="KW-0297">G-protein coupled receptor</keyword>
<keyword id="KW-0325">Glycoprotein</keyword>
<keyword id="KW-0449">Lipoprotein</keyword>
<keyword id="KW-0472">Membrane</keyword>
<keyword id="KW-0564">Palmitate</keyword>
<keyword id="KW-0597">Phosphoprotein</keyword>
<keyword id="KW-0675">Receptor</keyword>
<keyword id="KW-0807">Transducer</keyword>
<keyword id="KW-0812">Transmembrane</keyword>
<keyword id="KW-1133">Transmembrane helix</keyword>
<name>5HT1B_SPAEH</name>
<sequence>MEEPGARCAPPPPAGSQTQTPSSNLSHNCSADSYIYQDSIALPWKVLLVALLALITLATTLSNAFVIATVYRTRKLHTPANYLIASLAVTDLLVSILVMPISTMYTVTGRWTLGQVVCDFWLSSDITCCTASIMHLCVIALDRYWAITDAVEYSAKRTPRRAAVMIALVWVFSISISLPRFFWRQAKAEEEVLDCLVNTDHVLYTVYSTVGAFYLPTLLLIALYGRIYVEARSRILKQTPNKTGKRLSRAQLISDSPGSTSSVTSINSRVPDVPSESGSPVYVNQVKVRVSDALLEKKKLMAARERKATKTLGIILGAFIVCWLPFFIISLVMPICKDACWFHMAIFDFFNWLGYLNSLINPIIYTMPNEDFKQAFHKLIRFKCTG</sequence>
<proteinExistence type="inferred from homology"/>
<reference key="1">
    <citation type="submission" date="1997-11" db="EMBL/GenBank/DDBJ databases">
        <authorList>
            <person name="Devor E.J."/>
            <person name="Nevo E."/>
        </authorList>
    </citation>
    <scope>NUCLEOTIDE SEQUENCE [GENOMIC DNA]</scope>
</reference>
<feature type="chain" id="PRO_0000068922" description="5-hydroxytryptamine receptor 1B">
    <location>
        <begin position="1"/>
        <end position="386"/>
    </location>
</feature>
<feature type="topological domain" description="Extracellular" evidence="1">
    <location>
        <begin position="1"/>
        <end position="42"/>
    </location>
</feature>
<feature type="transmembrane region" description="Helical; Name=1" evidence="1">
    <location>
        <begin position="43"/>
        <end position="68"/>
    </location>
</feature>
<feature type="topological domain" description="Cytoplasmic" evidence="1">
    <location>
        <begin position="69"/>
        <end position="82"/>
    </location>
</feature>
<feature type="transmembrane region" description="Helical; Name=2" evidence="1">
    <location>
        <begin position="83"/>
        <end position="107"/>
    </location>
</feature>
<feature type="topological domain" description="Extracellular" evidence="1">
    <location>
        <begin position="108"/>
        <end position="115"/>
    </location>
</feature>
<feature type="transmembrane region" description="Helical; Name=3" evidence="1">
    <location>
        <begin position="116"/>
        <end position="141"/>
    </location>
</feature>
<feature type="topological domain" description="Cytoplasmic" evidence="1">
    <location>
        <begin position="142"/>
        <end position="161"/>
    </location>
</feature>
<feature type="transmembrane region" description="Helical; Name=4" evidence="1">
    <location>
        <begin position="162"/>
        <end position="180"/>
    </location>
</feature>
<feature type="topological domain" description="Extracellular" evidence="1">
    <location>
        <begin position="181"/>
        <end position="201"/>
    </location>
</feature>
<feature type="transmembrane region" description="Helical; Name=5" evidence="1">
    <location>
        <begin position="202"/>
        <end position="225"/>
    </location>
</feature>
<feature type="topological domain" description="Cytoplasmic" evidence="1">
    <location>
        <begin position="226"/>
        <end position="311"/>
    </location>
</feature>
<feature type="transmembrane region" description="Helical; Name=6" evidence="1">
    <location>
        <begin position="312"/>
        <end position="333"/>
    </location>
</feature>
<feature type="topological domain" description="Extracellular" evidence="1">
    <location>
        <begin position="334"/>
        <end position="343"/>
    </location>
</feature>
<feature type="transmembrane region" description="Helical; Name=7" evidence="1">
    <location>
        <begin position="344"/>
        <end position="366"/>
    </location>
</feature>
<feature type="topological domain" description="Cytoplasmic" evidence="1">
    <location>
        <begin position="367"/>
        <end position="386"/>
    </location>
</feature>
<feature type="region of interest" description="Disordered" evidence="5">
    <location>
        <begin position="1"/>
        <end position="25"/>
    </location>
</feature>
<feature type="region of interest" description="Disordered" evidence="5">
    <location>
        <begin position="253"/>
        <end position="272"/>
    </location>
</feature>
<feature type="short sequence motif" description="DRY motif; important for ligand-induced conformation changes and signaling" evidence="2">
    <location>
        <begin position="142"/>
        <end position="144"/>
    </location>
</feature>
<feature type="short sequence motif" description="NPxxY motif; important for ligand-induced conformation changes and signaling" evidence="2">
    <location>
        <begin position="361"/>
        <end position="365"/>
    </location>
</feature>
<feature type="compositionally biased region" description="Polar residues" evidence="5">
    <location>
        <begin position="16"/>
        <end position="25"/>
    </location>
</feature>
<feature type="compositionally biased region" description="Low complexity" evidence="5">
    <location>
        <begin position="254"/>
        <end position="268"/>
    </location>
</feature>
<feature type="binding site" evidence="1">
    <location>
        <position position="125"/>
    </location>
    <ligand>
        <name>ergotamine</name>
        <dbReference type="ChEBI" id="CHEBI:190463"/>
        <note>agonist</note>
    </ligand>
</feature>
<feature type="binding site" evidence="1">
    <location>
        <position position="130"/>
    </location>
    <ligand>
        <name>ergotamine</name>
        <dbReference type="ChEBI" id="CHEBI:190463"/>
        <note>agonist</note>
    </ligand>
</feature>
<feature type="binding site" evidence="1">
    <location>
        <position position="197"/>
    </location>
    <ligand>
        <name>ergotamine</name>
        <dbReference type="ChEBI" id="CHEBI:190463"/>
        <note>agonist</note>
    </ligand>
</feature>
<feature type="site" description="Important for species-specific agonist sensitivity" evidence="1">
    <location>
        <position position="351"/>
    </location>
</feature>
<feature type="lipid moiety-binding region" description="S-palmitoyl cysteine" evidence="3">
    <location>
        <position position="384"/>
    </location>
</feature>
<feature type="glycosylation site" description="N-linked (GlcNAc...) asparagine" evidence="3">
    <location>
        <position position="24"/>
    </location>
</feature>
<feature type="glycosylation site" description="N-linked (GlcNAc...) asparagine" evidence="3">
    <location>
        <position position="28"/>
    </location>
</feature>
<feature type="disulfide bond" evidence="4">
    <location>
        <begin position="118"/>
        <end position="195"/>
    </location>
</feature>